<reference key="1">
    <citation type="submission" date="2002-12" db="EMBL/GenBank/DDBJ databases">
        <title>Complete genome sequence of Vibrio vulnificus CMCP6.</title>
        <authorList>
            <person name="Rhee J.H."/>
            <person name="Kim S.Y."/>
            <person name="Chung S.S."/>
            <person name="Kim J.J."/>
            <person name="Moon Y.H."/>
            <person name="Jeong H."/>
            <person name="Choy H.E."/>
        </authorList>
    </citation>
    <scope>NUCLEOTIDE SEQUENCE [LARGE SCALE GENOMIC DNA]</scope>
    <source>
        <strain>CMCP6</strain>
    </source>
</reference>
<comment type="function">
    <text evidence="1">Single strand-specific metallo-endoribonuclease involved in late-stage 70S ribosome quality control and in maturation of the 3' terminus of the 16S rRNA.</text>
</comment>
<comment type="cofactor">
    <cofactor evidence="1">
        <name>Zn(2+)</name>
        <dbReference type="ChEBI" id="CHEBI:29105"/>
    </cofactor>
    <text evidence="1">Binds 1 zinc ion.</text>
</comment>
<comment type="subcellular location">
    <subcellularLocation>
        <location evidence="1">Cytoplasm</location>
    </subcellularLocation>
</comment>
<comment type="similarity">
    <text evidence="1">Belongs to the endoribonuclease YbeY family.</text>
</comment>
<accession>Q8DFE6</accession>
<protein>
    <recommendedName>
        <fullName evidence="1">Endoribonuclease YbeY</fullName>
        <ecNumber evidence="1">3.1.-.-</ecNumber>
    </recommendedName>
</protein>
<dbReference type="EC" id="3.1.-.-" evidence="1"/>
<dbReference type="EMBL" id="AE016795">
    <property type="protein sequence ID" value="AAO08802.1"/>
    <property type="molecule type" value="Genomic_DNA"/>
</dbReference>
<dbReference type="RefSeq" id="WP_011078377.1">
    <property type="nucleotide sequence ID" value="NC_004459.3"/>
</dbReference>
<dbReference type="SMR" id="Q8DFE6"/>
<dbReference type="KEGG" id="vvu:VV1_0268"/>
<dbReference type="HOGENOM" id="CLU_106710_0_1_6"/>
<dbReference type="Proteomes" id="UP000002275">
    <property type="component" value="Chromosome 1"/>
</dbReference>
<dbReference type="GO" id="GO:0005737">
    <property type="term" value="C:cytoplasm"/>
    <property type="evidence" value="ECO:0007669"/>
    <property type="project" value="UniProtKB-SubCell"/>
</dbReference>
<dbReference type="GO" id="GO:0004222">
    <property type="term" value="F:metalloendopeptidase activity"/>
    <property type="evidence" value="ECO:0007669"/>
    <property type="project" value="InterPro"/>
</dbReference>
<dbReference type="GO" id="GO:0004521">
    <property type="term" value="F:RNA endonuclease activity"/>
    <property type="evidence" value="ECO:0007669"/>
    <property type="project" value="UniProtKB-UniRule"/>
</dbReference>
<dbReference type="GO" id="GO:0008270">
    <property type="term" value="F:zinc ion binding"/>
    <property type="evidence" value="ECO:0007669"/>
    <property type="project" value="UniProtKB-UniRule"/>
</dbReference>
<dbReference type="GO" id="GO:0006364">
    <property type="term" value="P:rRNA processing"/>
    <property type="evidence" value="ECO:0007669"/>
    <property type="project" value="UniProtKB-UniRule"/>
</dbReference>
<dbReference type="Gene3D" id="3.40.390.30">
    <property type="entry name" value="Metalloproteases ('zincins'), catalytic domain"/>
    <property type="match status" value="1"/>
</dbReference>
<dbReference type="HAMAP" id="MF_00009">
    <property type="entry name" value="Endoribonucl_YbeY"/>
    <property type="match status" value="1"/>
</dbReference>
<dbReference type="InterPro" id="IPR023091">
    <property type="entry name" value="MetalPrtase_cat_dom_sf_prd"/>
</dbReference>
<dbReference type="InterPro" id="IPR002036">
    <property type="entry name" value="YbeY"/>
</dbReference>
<dbReference type="InterPro" id="IPR020549">
    <property type="entry name" value="YbeY_CS"/>
</dbReference>
<dbReference type="NCBIfam" id="TIGR00043">
    <property type="entry name" value="rRNA maturation RNase YbeY"/>
    <property type="match status" value="1"/>
</dbReference>
<dbReference type="PANTHER" id="PTHR46986">
    <property type="entry name" value="ENDORIBONUCLEASE YBEY, CHLOROPLASTIC"/>
    <property type="match status" value="1"/>
</dbReference>
<dbReference type="PANTHER" id="PTHR46986:SF1">
    <property type="entry name" value="ENDORIBONUCLEASE YBEY, CHLOROPLASTIC"/>
    <property type="match status" value="1"/>
</dbReference>
<dbReference type="Pfam" id="PF02130">
    <property type="entry name" value="YbeY"/>
    <property type="match status" value="1"/>
</dbReference>
<dbReference type="SUPFAM" id="SSF55486">
    <property type="entry name" value="Metalloproteases ('zincins'), catalytic domain"/>
    <property type="match status" value="1"/>
</dbReference>
<dbReference type="PROSITE" id="PS01306">
    <property type="entry name" value="UPF0054"/>
    <property type="match status" value="1"/>
</dbReference>
<feature type="chain" id="PRO_0000102565" description="Endoribonuclease YbeY">
    <location>
        <begin position="1"/>
        <end position="154"/>
    </location>
</feature>
<feature type="binding site" evidence="1">
    <location>
        <position position="113"/>
    </location>
    <ligand>
        <name>Zn(2+)</name>
        <dbReference type="ChEBI" id="CHEBI:29105"/>
        <note>catalytic</note>
    </ligand>
</feature>
<feature type="binding site" evidence="1">
    <location>
        <position position="117"/>
    </location>
    <ligand>
        <name>Zn(2+)</name>
        <dbReference type="ChEBI" id="CHEBI:29105"/>
        <note>catalytic</note>
    </ligand>
</feature>
<feature type="binding site" evidence="1">
    <location>
        <position position="123"/>
    </location>
    <ligand>
        <name>Zn(2+)</name>
        <dbReference type="ChEBI" id="CHEBI:29105"/>
        <note>catalytic</note>
    </ligand>
</feature>
<evidence type="ECO:0000255" key="1">
    <source>
        <dbReference type="HAMAP-Rule" id="MF_00009"/>
    </source>
</evidence>
<gene>
    <name evidence="1" type="primary">ybeY</name>
    <name type="ordered locus">VV1_0268</name>
</gene>
<sequence length="154" mass="17515">MAIELDLQLAVEDQNGLPSAQDFQTWLDKTIPPFQPQAEVTIRIVDSQESHQLNHDYRGKDKPTNVLSFPFEAPPGMEMDLLGDLVICRQVVEQEAIDQDKPLMAHWAHMVVHGSLHLLGYDHIEDDEAEEMESLETEIMQGMGFTDPYLAEKE</sequence>
<name>YBEY_VIBVU</name>
<proteinExistence type="inferred from homology"/>
<keyword id="KW-0963">Cytoplasm</keyword>
<keyword id="KW-0255">Endonuclease</keyword>
<keyword id="KW-0378">Hydrolase</keyword>
<keyword id="KW-0479">Metal-binding</keyword>
<keyword id="KW-0540">Nuclease</keyword>
<keyword id="KW-0690">Ribosome biogenesis</keyword>
<keyword id="KW-0698">rRNA processing</keyword>
<keyword id="KW-0862">Zinc</keyword>
<organism>
    <name type="scientific">Vibrio vulnificus (strain CMCP6)</name>
    <dbReference type="NCBI Taxonomy" id="216895"/>
    <lineage>
        <taxon>Bacteria</taxon>
        <taxon>Pseudomonadati</taxon>
        <taxon>Pseudomonadota</taxon>
        <taxon>Gammaproteobacteria</taxon>
        <taxon>Vibrionales</taxon>
        <taxon>Vibrionaceae</taxon>
        <taxon>Vibrio</taxon>
    </lineage>
</organism>